<proteinExistence type="inferred from homology"/>
<accession>Q9ZVA5</accession>
<comment type="subcellular location">
    <subcellularLocation>
        <location evidence="6">Secreted</location>
    </subcellularLocation>
    <subcellularLocation>
        <location evidence="5">Secreted</location>
        <location evidence="5">Cell wall</location>
    </subcellularLocation>
</comment>
<feature type="signal peptide" evidence="1">
    <location>
        <begin position="1"/>
        <end position="22"/>
    </location>
</feature>
<feature type="chain" id="PRO_5009974830" description="EP1-like glycoprotein 4" evidence="1">
    <location>
        <begin position="23"/>
        <end position="443"/>
    </location>
</feature>
<feature type="domain" description="Bulb-type lectin" evidence="2">
    <location>
        <begin position="29"/>
        <end position="159"/>
    </location>
</feature>
<feature type="repeat" description="WD" evidence="1">
    <location>
        <begin position="254"/>
        <end position="296"/>
    </location>
</feature>
<feature type="domain" description="PAN" evidence="3">
    <location>
        <begin position="356"/>
        <end position="433"/>
    </location>
</feature>
<feature type="glycosylation site" description="N-linked (GlcNAc...) asparagine" evidence="4">
    <location>
        <position position="66"/>
    </location>
</feature>
<feature type="glycosylation site" description="N-linked (GlcNAc...) asparagine" evidence="4">
    <location>
        <position position="102"/>
    </location>
</feature>
<feature type="glycosylation site" description="N-linked (GlcNAc...) asparagine" evidence="4">
    <location>
        <position position="258"/>
    </location>
</feature>
<feature type="glycosylation site" description="N-linked (GlcNAc...) asparagine" evidence="4">
    <location>
        <position position="269"/>
    </location>
</feature>
<feature type="glycosylation site" description="N-linked (GlcNAc...) asparagine" evidence="4">
    <location>
        <position position="434"/>
    </location>
</feature>
<feature type="disulfide bond" evidence="3">
    <location>
        <begin position="387"/>
        <end position="409"/>
    </location>
</feature>
<feature type="disulfide bond" evidence="3">
    <location>
        <begin position="391"/>
        <end position="397"/>
    </location>
</feature>
<evidence type="ECO:0000255" key="1"/>
<evidence type="ECO:0000255" key="2">
    <source>
        <dbReference type="PROSITE-ProRule" id="PRU00038"/>
    </source>
</evidence>
<evidence type="ECO:0000255" key="3">
    <source>
        <dbReference type="PROSITE-ProRule" id="PRU00315"/>
    </source>
</evidence>
<evidence type="ECO:0000255" key="4">
    <source>
        <dbReference type="PROSITE-ProRule" id="PRU00498"/>
    </source>
</evidence>
<evidence type="ECO:0000269" key="5">
    <source>
    </source>
</evidence>
<evidence type="ECO:0000269" key="6">
    <source>
    </source>
</evidence>
<evidence type="ECO:0000303" key="7">
    <source>
    </source>
</evidence>
<evidence type="ECO:0000305" key="8"/>
<evidence type="ECO:0000312" key="9">
    <source>
        <dbReference type="Araport" id="AT1G78860"/>
    </source>
</evidence>
<evidence type="ECO:0000312" key="10">
    <source>
        <dbReference type="EMBL" id="AAC83024.1"/>
    </source>
</evidence>
<keyword id="KW-0134">Cell wall</keyword>
<keyword id="KW-1015">Disulfide bond</keyword>
<keyword id="KW-0325">Glycoprotein</keyword>
<keyword id="KW-0430">Lectin</keyword>
<keyword id="KW-1185">Reference proteome</keyword>
<keyword id="KW-0964">Secreted</keyword>
<keyword id="KW-0732">Signal</keyword>
<keyword id="KW-0853">WD repeat</keyword>
<sequence length="443" mass="49194">MEFSTTLALFFTLSIFLVGAQAKVPVDDQFRVVNEGGYTDYSPIEYNPDVRGFVPFSDNFRLCFYNTTQNAYTLALRIGNRAQESTLRWVWEANRGSPVKENATLTFGEDGNLVLAEADGRVVWQTNTANKGVVGIKILENGNMVIYDSNGKFVWQSFDSPTDTLLVGQSLKLNGQNKLVSRLSPSVNANGPYSLVMEAKKLVLYYTTNKTPKPIGYYEYEFFTKIAQLQSMTFQAVEDADTTWGLHMEGVDSGSQFNVSTFLSRPKHNATLSFLRLESDGNIRVWSYSTLATSTAWDVTYTAFTNDNTDGNDECRIPEHCLGFGLCKKGQCNACPSDIGLLGWDETCKIPSLASCDPKTFHYFKIEGADSFMTKYNGGSTTTESACGDKCTRDCKCLGFFYNRKSSRCWLGYELKTLTKTGDTSLVAYVKAPNASKKSALAI</sequence>
<protein>
    <recommendedName>
        <fullName evidence="8">EP1-like glycoprotein 4</fullName>
    </recommendedName>
    <alternativeName>
        <fullName evidence="7">Curculin-like (Mannose-binding) lectin family protein</fullName>
    </alternativeName>
</protein>
<gene>
    <name evidence="9" type="ordered locus">At1g78860</name>
    <name evidence="10" type="ORF">F9K20.9</name>
</gene>
<organism>
    <name type="scientific">Arabidopsis thaliana</name>
    <name type="common">Mouse-ear cress</name>
    <dbReference type="NCBI Taxonomy" id="3702"/>
    <lineage>
        <taxon>Eukaryota</taxon>
        <taxon>Viridiplantae</taxon>
        <taxon>Streptophyta</taxon>
        <taxon>Embryophyta</taxon>
        <taxon>Tracheophyta</taxon>
        <taxon>Spermatophyta</taxon>
        <taxon>Magnoliopsida</taxon>
        <taxon>eudicotyledons</taxon>
        <taxon>Gunneridae</taxon>
        <taxon>Pentapetalae</taxon>
        <taxon>rosids</taxon>
        <taxon>malvids</taxon>
        <taxon>Brassicales</taxon>
        <taxon>Brassicaceae</taxon>
        <taxon>Camelineae</taxon>
        <taxon>Arabidopsis</taxon>
    </lineage>
</organism>
<reference key="1">
    <citation type="journal article" date="2000" name="Nature">
        <title>Sequence and analysis of chromosome 1 of the plant Arabidopsis thaliana.</title>
        <authorList>
            <person name="Theologis A."/>
            <person name="Ecker J.R."/>
            <person name="Palm C.J."/>
            <person name="Federspiel N.A."/>
            <person name="Kaul S."/>
            <person name="White O."/>
            <person name="Alonso J."/>
            <person name="Altafi H."/>
            <person name="Araujo R."/>
            <person name="Bowman C.L."/>
            <person name="Brooks S.Y."/>
            <person name="Buehler E."/>
            <person name="Chan A."/>
            <person name="Chao Q."/>
            <person name="Chen H."/>
            <person name="Cheuk R.F."/>
            <person name="Chin C.W."/>
            <person name="Chung M.K."/>
            <person name="Conn L."/>
            <person name="Conway A.B."/>
            <person name="Conway A.R."/>
            <person name="Creasy T.H."/>
            <person name="Dewar K."/>
            <person name="Dunn P."/>
            <person name="Etgu P."/>
            <person name="Feldblyum T.V."/>
            <person name="Feng J.-D."/>
            <person name="Fong B."/>
            <person name="Fujii C.Y."/>
            <person name="Gill J.E."/>
            <person name="Goldsmith A.D."/>
            <person name="Haas B."/>
            <person name="Hansen N.F."/>
            <person name="Hughes B."/>
            <person name="Huizar L."/>
            <person name="Hunter J.L."/>
            <person name="Jenkins J."/>
            <person name="Johnson-Hopson C."/>
            <person name="Khan S."/>
            <person name="Khaykin E."/>
            <person name="Kim C.J."/>
            <person name="Koo H.L."/>
            <person name="Kremenetskaia I."/>
            <person name="Kurtz D.B."/>
            <person name="Kwan A."/>
            <person name="Lam B."/>
            <person name="Langin-Hooper S."/>
            <person name="Lee A."/>
            <person name="Lee J.M."/>
            <person name="Lenz C.A."/>
            <person name="Li J.H."/>
            <person name="Li Y.-P."/>
            <person name="Lin X."/>
            <person name="Liu S.X."/>
            <person name="Liu Z.A."/>
            <person name="Luros J.S."/>
            <person name="Maiti R."/>
            <person name="Marziali A."/>
            <person name="Militscher J."/>
            <person name="Miranda M."/>
            <person name="Nguyen M."/>
            <person name="Nierman W.C."/>
            <person name="Osborne B.I."/>
            <person name="Pai G."/>
            <person name="Peterson J."/>
            <person name="Pham P.K."/>
            <person name="Rizzo M."/>
            <person name="Rooney T."/>
            <person name="Rowley D."/>
            <person name="Sakano H."/>
            <person name="Salzberg S.L."/>
            <person name="Schwartz J.R."/>
            <person name="Shinn P."/>
            <person name="Southwick A.M."/>
            <person name="Sun H."/>
            <person name="Tallon L.J."/>
            <person name="Tambunga G."/>
            <person name="Toriumi M.J."/>
            <person name="Town C.D."/>
            <person name="Utterback T."/>
            <person name="Van Aken S."/>
            <person name="Vaysberg M."/>
            <person name="Vysotskaia V.S."/>
            <person name="Walker M."/>
            <person name="Wu D."/>
            <person name="Yu G."/>
            <person name="Fraser C.M."/>
            <person name="Venter J.C."/>
            <person name="Davis R.W."/>
        </authorList>
    </citation>
    <scope>NUCLEOTIDE SEQUENCE [LARGE SCALE GENOMIC DNA]</scope>
    <source>
        <strain>cv. Columbia</strain>
    </source>
</reference>
<reference key="2">
    <citation type="journal article" date="2017" name="Plant J.">
        <title>Araport11: a complete reannotation of the Arabidopsis thaliana reference genome.</title>
        <authorList>
            <person name="Cheng C.Y."/>
            <person name="Krishnakumar V."/>
            <person name="Chan A.P."/>
            <person name="Thibaud-Nissen F."/>
            <person name="Schobel S."/>
            <person name="Town C.D."/>
        </authorList>
    </citation>
    <scope>GENOME REANNOTATION</scope>
    <source>
        <strain>cv. Columbia</strain>
    </source>
</reference>
<reference key="3">
    <citation type="journal article" date="2008" name="BMC Plant Biol.">
        <title>A new picture of cell wall protein dynamics in elongating cells of Arabidopsis thaliana: confirmed actors and newcomers.</title>
        <authorList>
            <person name="Irshad M."/>
            <person name="Canut H."/>
            <person name="Borderies G."/>
            <person name="Pont-Lezica R."/>
            <person name="Jamet E."/>
        </authorList>
    </citation>
    <scope>SUBCELLULAR LOCATION</scope>
</reference>
<reference key="4">
    <citation type="journal article" date="2013" name="Plant J.">
        <title>An in vivo expression system for the identification of cargo proteins of vacuolar sorting receptors in Arabidopsis culture cells.</title>
        <authorList>
            <person name="Shen J."/>
            <person name="Suen P.K."/>
            <person name="Wang X."/>
            <person name="Lin Y."/>
            <person name="Lo S.W."/>
            <person name="Rojo E."/>
            <person name="Jiang L."/>
        </authorList>
    </citation>
    <scope>SUBCELLULAR LOCATION</scope>
</reference>
<dbReference type="EMBL" id="AC005679">
    <property type="protein sequence ID" value="AAC83024.1"/>
    <property type="molecule type" value="Genomic_DNA"/>
</dbReference>
<dbReference type="EMBL" id="CP002684">
    <property type="protein sequence ID" value="AEE36163.1"/>
    <property type="molecule type" value="Genomic_DNA"/>
</dbReference>
<dbReference type="PIR" id="A96818">
    <property type="entry name" value="A96818"/>
</dbReference>
<dbReference type="RefSeq" id="NP_178007.1">
    <property type="nucleotide sequence ID" value="NM_106534.2"/>
</dbReference>
<dbReference type="SMR" id="Q9ZVA5"/>
<dbReference type="FunCoup" id="Q9ZVA5">
    <property type="interactions" value="23"/>
</dbReference>
<dbReference type="IntAct" id="Q9ZVA5">
    <property type="interactions" value="1"/>
</dbReference>
<dbReference type="STRING" id="3702.Q9ZVA5"/>
<dbReference type="GlyGen" id="Q9ZVA5">
    <property type="glycosylation" value="5 sites"/>
</dbReference>
<dbReference type="PaxDb" id="3702-AT1G78860.1"/>
<dbReference type="ProteomicsDB" id="222325"/>
<dbReference type="EnsemblPlants" id="AT1G78860.1">
    <property type="protein sequence ID" value="AT1G78860.1"/>
    <property type="gene ID" value="AT1G78860"/>
</dbReference>
<dbReference type="GeneID" id="844223"/>
<dbReference type="Gramene" id="AT1G78860.1">
    <property type="protein sequence ID" value="AT1G78860.1"/>
    <property type="gene ID" value="AT1G78860"/>
</dbReference>
<dbReference type="KEGG" id="ath:AT1G78860"/>
<dbReference type="Araport" id="AT1G78860"/>
<dbReference type="TAIR" id="AT1G78860">
    <property type="gene designation" value="GAL2"/>
</dbReference>
<dbReference type="eggNOG" id="ENOG502QWJD">
    <property type="taxonomic scope" value="Eukaryota"/>
</dbReference>
<dbReference type="HOGENOM" id="CLU_043351_0_0_1"/>
<dbReference type="InParanoid" id="Q9ZVA5"/>
<dbReference type="OMA" id="ECQWPEK"/>
<dbReference type="OrthoDB" id="1884773at2759"/>
<dbReference type="PhylomeDB" id="Q9ZVA5"/>
<dbReference type="PRO" id="PR:Q9ZVA5"/>
<dbReference type="Proteomes" id="UP000006548">
    <property type="component" value="Chromosome 1"/>
</dbReference>
<dbReference type="ExpressionAtlas" id="Q9ZVA5">
    <property type="expression patterns" value="baseline and differential"/>
</dbReference>
<dbReference type="GO" id="GO:0005576">
    <property type="term" value="C:extracellular region"/>
    <property type="evidence" value="ECO:0007669"/>
    <property type="project" value="UniProtKB-SubCell"/>
</dbReference>
<dbReference type="GO" id="GO:0005739">
    <property type="term" value="C:mitochondrion"/>
    <property type="evidence" value="ECO:0007005"/>
    <property type="project" value="TAIR"/>
</dbReference>
<dbReference type="GO" id="GO:0030246">
    <property type="term" value="F:carbohydrate binding"/>
    <property type="evidence" value="ECO:0007669"/>
    <property type="project" value="UniProtKB-KW"/>
</dbReference>
<dbReference type="CDD" id="cd00028">
    <property type="entry name" value="B_lectin"/>
    <property type="match status" value="1"/>
</dbReference>
<dbReference type="CDD" id="cd01098">
    <property type="entry name" value="PAN_AP_plant"/>
    <property type="match status" value="1"/>
</dbReference>
<dbReference type="FunFam" id="2.90.10.10:FF:000018">
    <property type="entry name" value="EP1-like glycoprotein 2"/>
    <property type="match status" value="1"/>
</dbReference>
<dbReference type="FunFam" id="2.90.10.30:FF:000003">
    <property type="entry name" value="Os04g0303100 protein"/>
    <property type="match status" value="1"/>
</dbReference>
<dbReference type="Gene3D" id="2.90.10.10">
    <property type="entry name" value="Bulb-type lectin domain"/>
    <property type="match status" value="1"/>
</dbReference>
<dbReference type="InterPro" id="IPR001480">
    <property type="entry name" value="Bulb-type_lectin_dom"/>
</dbReference>
<dbReference type="InterPro" id="IPR036426">
    <property type="entry name" value="Bulb-type_lectin_dom_sf"/>
</dbReference>
<dbReference type="InterPro" id="IPR051343">
    <property type="entry name" value="G-type_lectin_kinases/EP1-like"/>
</dbReference>
<dbReference type="InterPro" id="IPR003609">
    <property type="entry name" value="Pan_app"/>
</dbReference>
<dbReference type="InterPro" id="IPR035446">
    <property type="entry name" value="SLSG/EP1"/>
</dbReference>
<dbReference type="PANTHER" id="PTHR47976">
    <property type="entry name" value="G-TYPE LECTIN S-RECEPTOR-LIKE SERINE/THREONINE-PROTEIN KINASE SD2-5"/>
    <property type="match status" value="1"/>
</dbReference>
<dbReference type="PANTHER" id="PTHR47976:SF115">
    <property type="entry name" value="RECEPTOR-LIKE SERINE_THREONINE-PROTEIN KINASE"/>
    <property type="match status" value="1"/>
</dbReference>
<dbReference type="Pfam" id="PF01453">
    <property type="entry name" value="B_lectin"/>
    <property type="match status" value="1"/>
</dbReference>
<dbReference type="PIRSF" id="PIRSF002686">
    <property type="entry name" value="SLG"/>
    <property type="match status" value="1"/>
</dbReference>
<dbReference type="SMART" id="SM00108">
    <property type="entry name" value="B_lectin"/>
    <property type="match status" value="1"/>
</dbReference>
<dbReference type="SUPFAM" id="SSF51110">
    <property type="entry name" value="alpha-D-mannose-specific plant lectins"/>
    <property type="match status" value="1"/>
</dbReference>
<dbReference type="PROSITE" id="PS50927">
    <property type="entry name" value="BULB_LECTIN"/>
    <property type="match status" value="1"/>
</dbReference>
<dbReference type="PROSITE" id="PS50948">
    <property type="entry name" value="PAN"/>
    <property type="match status" value="1"/>
</dbReference>
<name>EP1L4_ARATH</name>